<organism>
    <name type="scientific">Arabidopsis thaliana</name>
    <name type="common">Mouse-ear cress</name>
    <dbReference type="NCBI Taxonomy" id="3702"/>
    <lineage>
        <taxon>Eukaryota</taxon>
        <taxon>Viridiplantae</taxon>
        <taxon>Streptophyta</taxon>
        <taxon>Embryophyta</taxon>
        <taxon>Tracheophyta</taxon>
        <taxon>Spermatophyta</taxon>
        <taxon>Magnoliopsida</taxon>
        <taxon>eudicotyledons</taxon>
        <taxon>Gunneridae</taxon>
        <taxon>Pentapetalae</taxon>
        <taxon>rosids</taxon>
        <taxon>malvids</taxon>
        <taxon>Brassicales</taxon>
        <taxon>Brassicaceae</taxon>
        <taxon>Camelineae</taxon>
        <taxon>Arabidopsis</taxon>
    </lineage>
</organism>
<accession>Q9C6W4</accession>
<accession>F4IAX4</accession>
<gene>
    <name type="primary">BGAL15</name>
    <name type="ordered locus">At1g31740</name>
    <name type="ORF">F27M3.5</name>
</gene>
<feature type="signal peptide" evidence="1">
    <location>
        <begin position="1"/>
        <end position="19"/>
    </location>
</feature>
<feature type="chain" id="PRO_0000293094" description="Beta-galactosidase 15">
    <location>
        <begin position="20"/>
        <end position="779"/>
    </location>
</feature>
<feature type="domain" description="SUEL-type lectin" evidence="2">
    <location>
        <begin position="694"/>
        <end position="779"/>
    </location>
</feature>
<feature type="active site" description="Proton donor" evidence="1">
    <location>
        <position position="178"/>
    </location>
</feature>
<feature type="active site" description="Nucleophile" evidence="1">
    <location>
        <position position="247"/>
    </location>
</feature>
<feature type="glycosylation site" description="N-linked (GlcNAc...) asparagine" evidence="1">
    <location>
        <position position="148"/>
    </location>
</feature>
<feature type="glycosylation site" description="N-linked (GlcNAc...) asparagine" evidence="1">
    <location>
        <position position="248"/>
    </location>
</feature>
<feature type="glycosylation site" description="N-linked (GlcNAc...) asparagine" evidence="1">
    <location>
        <position position="345"/>
    </location>
</feature>
<feature type="glycosylation site" description="N-linked (GlcNAc...) asparagine" evidence="1">
    <location>
        <position position="374"/>
    </location>
</feature>
<feature type="glycosylation site" description="N-linked (GlcNAc...) asparagine" evidence="1">
    <location>
        <position position="489"/>
    </location>
</feature>
<feature type="glycosylation site" description="N-linked (GlcNAc...) asparagine" evidence="1">
    <location>
        <position position="495"/>
    </location>
</feature>
<feature type="glycosylation site" description="N-linked (GlcNAc...) asparagine" evidence="1">
    <location>
        <position position="555"/>
    </location>
</feature>
<dbReference type="EC" id="3.2.1.23"/>
<dbReference type="EMBL" id="AC074360">
    <property type="protein sequence ID" value="AAG60136.1"/>
    <property type="molecule type" value="Genomic_DNA"/>
</dbReference>
<dbReference type="EMBL" id="CP002684">
    <property type="protein sequence ID" value="AEE31387.2"/>
    <property type="molecule type" value="Genomic_DNA"/>
</dbReference>
<dbReference type="RefSeq" id="NP_001319124.1">
    <property type="nucleotide sequence ID" value="NM_001332978.1"/>
</dbReference>
<dbReference type="SMR" id="Q9C6W4"/>
<dbReference type="STRING" id="3702.Q9C6W4"/>
<dbReference type="CAZy" id="GH35">
    <property type="family name" value="Glycoside Hydrolase Family 35"/>
</dbReference>
<dbReference type="GlyCosmos" id="Q9C6W4">
    <property type="glycosylation" value="7 sites, No reported glycans"/>
</dbReference>
<dbReference type="GlyGen" id="Q9C6W4">
    <property type="glycosylation" value="7 sites"/>
</dbReference>
<dbReference type="PaxDb" id="3702-AT1G31740.1"/>
<dbReference type="ProteomicsDB" id="240857"/>
<dbReference type="EnsemblPlants" id="AT1G31740.1">
    <property type="protein sequence ID" value="AT1G31740.1"/>
    <property type="gene ID" value="AT1G31740"/>
</dbReference>
<dbReference type="GeneID" id="840061"/>
<dbReference type="Gramene" id="AT1G31740.1">
    <property type="protein sequence ID" value="AT1G31740.1"/>
    <property type="gene ID" value="AT1G31740"/>
</dbReference>
<dbReference type="KEGG" id="ath:AT1G31740"/>
<dbReference type="Araport" id="AT1G31740"/>
<dbReference type="TAIR" id="AT1G31740">
    <property type="gene designation" value="BGAL15"/>
</dbReference>
<dbReference type="eggNOG" id="KOG0496">
    <property type="taxonomic scope" value="Eukaryota"/>
</dbReference>
<dbReference type="HOGENOM" id="CLU_007853_4_0_1"/>
<dbReference type="InParanoid" id="Q9C6W4"/>
<dbReference type="OMA" id="TYNTAKI"/>
<dbReference type="PhylomeDB" id="Q9C6W4"/>
<dbReference type="BioCyc" id="ARA:AT1G31740-MONOMER"/>
<dbReference type="PRO" id="PR:Q9C6W4"/>
<dbReference type="Proteomes" id="UP000006548">
    <property type="component" value="Chromosome 1"/>
</dbReference>
<dbReference type="ExpressionAtlas" id="Q9C6W4">
    <property type="expression patterns" value="baseline and differential"/>
</dbReference>
<dbReference type="GO" id="GO:0048046">
    <property type="term" value="C:apoplast"/>
    <property type="evidence" value="ECO:0007669"/>
    <property type="project" value="UniProtKB-SubCell"/>
</dbReference>
<dbReference type="GO" id="GO:0004565">
    <property type="term" value="F:beta-galactosidase activity"/>
    <property type="evidence" value="ECO:0007669"/>
    <property type="project" value="UniProtKB-EC"/>
</dbReference>
<dbReference type="GO" id="GO:0030246">
    <property type="term" value="F:carbohydrate binding"/>
    <property type="evidence" value="ECO:0007669"/>
    <property type="project" value="InterPro"/>
</dbReference>
<dbReference type="GO" id="GO:0005975">
    <property type="term" value="P:carbohydrate metabolic process"/>
    <property type="evidence" value="ECO:0007669"/>
    <property type="project" value="InterPro"/>
</dbReference>
<dbReference type="CDD" id="cd22842">
    <property type="entry name" value="Gal_Rha_Lectin_BGal"/>
    <property type="match status" value="1"/>
</dbReference>
<dbReference type="FunFam" id="2.60.120.260:FF:000142">
    <property type="entry name" value="Beta-galactosidase"/>
    <property type="match status" value="1"/>
</dbReference>
<dbReference type="FunFam" id="3.20.20.80:FF:000098">
    <property type="entry name" value="Beta-galactosidase"/>
    <property type="match status" value="1"/>
</dbReference>
<dbReference type="Gene3D" id="2.60.120.740">
    <property type="match status" value="1"/>
</dbReference>
<dbReference type="Gene3D" id="2.60.120.260">
    <property type="entry name" value="Galactose-binding domain-like"/>
    <property type="match status" value="2"/>
</dbReference>
<dbReference type="Gene3D" id="3.20.20.80">
    <property type="entry name" value="Glycosidases"/>
    <property type="match status" value="1"/>
</dbReference>
<dbReference type="InterPro" id="IPR048913">
    <property type="entry name" value="BetaGal_gal-bd"/>
</dbReference>
<dbReference type="InterPro" id="IPR008979">
    <property type="entry name" value="Galactose-bd-like_sf"/>
</dbReference>
<dbReference type="InterPro" id="IPR041392">
    <property type="entry name" value="GHD"/>
</dbReference>
<dbReference type="InterPro" id="IPR031330">
    <property type="entry name" value="Gly_Hdrlase_35_cat"/>
</dbReference>
<dbReference type="InterPro" id="IPR019801">
    <property type="entry name" value="Glyco_hydro_35_CS"/>
</dbReference>
<dbReference type="InterPro" id="IPR001944">
    <property type="entry name" value="Glycoside_Hdrlase_35"/>
</dbReference>
<dbReference type="InterPro" id="IPR017853">
    <property type="entry name" value="Glycoside_hydrolase_SF"/>
</dbReference>
<dbReference type="InterPro" id="IPR000922">
    <property type="entry name" value="Lectin_gal-bd_dom"/>
</dbReference>
<dbReference type="InterPro" id="IPR043159">
    <property type="entry name" value="Lectin_gal-bd_sf"/>
</dbReference>
<dbReference type="PANTHER" id="PTHR23421">
    <property type="entry name" value="BETA-GALACTOSIDASE RELATED"/>
    <property type="match status" value="1"/>
</dbReference>
<dbReference type="Pfam" id="PF21467">
    <property type="entry name" value="BetaGal_gal-bd"/>
    <property type="match status" value="2"/>
</dbReference>
<dbReference type="Pfam" id="PF17834">
    <property type="entry name" value="GHD"/>
    <property type="match status" value="1"/>
</dbReference>
<dbReference type="Pfam" id="PF01301">
    <property type="entry name" value="Glyco_hydro_35"/>
    <property type="match status" value="1"/>
</dbReference>
<dbReference type="Pfam" id="PF02140">
    <property type="entry name" value="SUEL_Lectin"/>
    <property type="match status" value="1"/>
</dbReference>
<dbReference type="PRINTS" id="PR00742">
    <property type="entry name" value="GLHYDRLASE35"/>
</dbReference>
<dbReference type="SUPFAM" id="SSF51445">
    <property type="entry name" value="(Trans)glycosidases"/>
    <property type="match status" value="1"/>
</dbReference>
<dbReference type="SUPFAM" id="SSF49785">
    <property type="entry name" value="Galactose-binding domain-like"/>
    <property type="match status" value="2"/>
</dbReference>
<dbReference type="PROSITE" id="PS01182">
    <property type="entry name" value="GLYCOSYL_HYDROL_F35"/>
    <property type="match status" value="1"/>
</dbReference>
<dbReference type="PROSITE" id="PS50228">
    <property type="entry name" value="SUEL_LECTIN"/>
    <property type="match status" value="1"/>
</dbReference>
<proteinExistence type="evidence at transcript level"/>
<sequence length="779" mass="86342">MVSLSFILCCVLVSSCAYATIVSHDGRAITIDGHRRVLLSGSIHYPRSTTEMWPDLIKKGKEGSLDAIETYVFWNAHEPTRRQYDFSGNLDLIRFLKTIQNEGMYGVLRIGPYVCAEWNYGGFPVWLHNMPGMEFRTTNTAFMNEMQNFTTMIVEMVKKEKLFASQGGPIILAQIENEYGNVIGSYGEAGKAYIQWCANMANSLDVGVPWIMCQQDDAPQPMLNTCNGYYCDNFSPNNPNTPKMWTENWTGWYKNWGGKDPHRTTEDVAFAVARFFQKEGTFQNYYMYHGGTNFDRTAGGPYITTTYDYDAPLDEFGNLNQPKYGHLKQLHDVLHAMEKTLTYGNISTVDFGNLVTATVYQTEEGSSCFIGNVNETSDAKINFQGTSYDVPAWSVSILPDCKTETYNTAKINTQTSVMVKKANEAENEPSTLKWSWRPENIDSVLLKGKGESTMRQLFDQKVVSNDESDYLWYMTTVNLKEQDPVLGKNMSLRINSTAHVLHAFVNGQHIGNYRVENGKFHYVFEQDAKFNPGANVITLLSITVGLPNYGAFFENFSAGITGPVFIIGRNGDETIVKDLSTHKWSYKTGLSGFENQLFSSESPSTWSAPLGSEPVVVDLLGLGKGTAWINGNNIGRYWPAFLSDIDGCSAEYHVPRSFLNSEGDNTLVLFEEIGGNPSLVNFQTIGVGSVCANVYEKNVLELSCNGKPISAIKFASFGNPGGDCGSFEKGTCEASNNAAAILTQECVGKEKCSIDVSEDKFGAAECGALAKRLAVEAIC</sequence>
<reference key="1">
    <citation type="journal article" date="2000" name="Nature">
        <title>Sequence and analysis of chromosome 1 of the plant Arabidopsis thaliana.</title>
        <authorList>
            <person name="Theologis A."/>
            <person name="Ecker J.R."/>
            <person name="Palm C.J."/>
            <person name="Federspiel N.A."/>
            <person name="Kaul S."/>
            <person name="White O."/>
            <person name="Alonso J."/>
            <person name="Altafi H."/>
            <person name="Araujo R."/>
            <person name="Bowman C.L."/>
            <person name="Brooks S.Y."/>
            <person name="Buehler E."/>
            <person name="Chan A."/>
            <person name="Chao Q."/>
            <person name="Chen H."/>
            <person name="Cheuk R.F."/>
            <person name="Chin C.W."/>
            <person name="Chung M.K."/>
            <person name="Conn L."/>
            <person name="Conway A.B."/>
            <person name="Conway A.R."/>
            <person name="Creasy T.H."/>
            <person name="Dewar K."/>
            <person name="Dunn P."/>
            <person name="Etgu P."/>
            <person name="Feldblyum T.V."/>
            <person name="Feng J.-D."/>
            <person name="Fong B."/>
            <person name="Fujii C.Y."/>
            <person name="Gill J.E."/>
            <person name="Goldsmith A.D."/>
            <person name="Haas B."/>
            <person name="Hansen N.F."/>
            <person name="Hughes B."/>
            <person name="Huizar L."/>
            <person name="Hunter J.L."/>
            <person name="Jenkins J."/>
            <person name="Johnson-Hopson C."/>
            <person name="Khan S."/>
            <person name="Khaykin E."/>
            <person name="Kim C.J."/>
            <person name="Koo H.L."/>
            <person name="Kremenetskaia I."/>
            <person name="Kurtz D.B."/>
            <person name="Kwan A."/>
            <person name="Lam B."/>
            <person name="Langin-Hooper S."/>
            <person name="Lee A."/>
            <person name="Lee J.M."/>
            <person name="Lenz C.A."/>
            <person name="Li J.H."/>
            <person name="Li Y.-P."/>
            <person name="Lin X."/>
            <person name="Liu S.X."/>
            <person name="Liu Z.A."/>
            <person name="Luros J.S."/>
            <person name="Maiti R."/>
            <person name="Marziali A."/>
            <person name="Militscher J."/>
            <person name="Miranda M."/>
            <person name="Nguyen M."/>
            <person name="Nierman W.C."/>
            <person name="Osborne B.I."/>
            <person name="Pai G."/>
            <person name="Peterson J."/>
            <person name="Pham P.K."/>
            <person name="Rizzo M."/>
            <person name="Rooney T."/>
            <person name="Rowley D."/>
            <person name="Sakano H."/>
            <person name="Salzberg S.L."/>
            <person name="Schwartz J.R."/>
            <person name="Shinn P."/>
            <person name="Southwick A.M."/>
            <person name="Sun H."/>
            <person name="Tallon L.J."/>
            <person name="Tambunga G."/>
            <person name="Toriumi M.J."/>
            <person name="Town C.D."/>
            <person name="Utterback T."/>
            <person name="Van Aken S."/>
            <person name="Vaysberg M."/>
            <person name="Vysotskaia V.S."/>
            <person name="Walker M."/>
            <person name="Wu D."/>
            <person name="Yu G."/>
            <person name="Fraser C.M."/>
            <person name="Venter J.C."/>
            <person name="Davis R.W."/>
        </authorList>
    </citation>
    <scope>NUCLEOTIDE SEQUENCE [LARGE SCALE GENOMIC DNA]</scope>
    <source>
        <strain>cv. Columbia</strain>
    </source>
</reference>
<reference key="2">
    <citation type="journal article" date="2017" name="Plant J.">
        <title>Araport11: a complete reannotation of the Arabidopsis thaliana reference genome.</title>
        <authorList>
            <person name="Cheng C.Y."/>
            <person name="Krishnakumar V."/>
            <person name="Chan A.P."/>
            <person name="Thibaud-Nissen F."/>
            <person name="Schobel S."/>
            <person name="Town C.D."/>
        </authorList>
    </citation>
    <scope>GENOME REANNOTATION</scope>
    <source>
        <strain>cv. Columbia</strain>
    </source>
</reference>
<reference key="3">
    <citation type="journal article" date="2006" name="Plant Cell Physiol.">
        <title>Apoplastic glycosidases active against xyloglucan oligosaccharides of Arabidopsis thaliana.</title>
        <authorList>
            <person name="Iglesias N."/>
            <person name="Abelenda J.A."/>
            <person name="Rodino M."/>
            <person name="Sampedro J."/>
            <person name="Revilla G."/>
            <person name="Zarra I."/>
        </authorList>
    </citation>
    <scope>TISSUE SPECIFICITY</scope>
</reference>
<reference key="4">
    <citation type="journal article" date="2007" name="Phytochemistry">
        <title>Functional genomic analysis of Arabidopsis thaliana glycoside hydrolase family 35.</title>
        <authorList>
            <person name="Ahn Y.O."/>
            <person name="Zheng M."/>
            <person name="Bevan D.R."/>
            <person name="Esen A."/>
            <person name="Shiu S.-H."/>
            <person name="Benson J."/>
            <person name="Peng H.-P."/>
            <person name="Miller J.T."/>
            <person name="Cheng C.-L."/>
            <person name="Poulton J.E."/>
            <person name="Shih M.-C."/>
        </authorList>
    </citation>
    <scope>GENE FAMILY</scope>
    <scope>NOMENCLATURE</scope>
</reference>
<name>BGA15_ARATH</name>
<keyword id="KW-0052">Apoplast</keyword>
<keyword id="KW-0325">Glycoprotein</keyword>
<keyword id="KW-0326">Glycosidase</keyword>
<keyword id="KW-0378">Hydrolase</keyword>
<keyword id="KW-1185">Reference proteome</keyword>
<keyword id="KW-0964">Secreted</keyword>
<keyword id="KW-0732">Signal</keyword>
<evidence type="ECO:0000255" key="1"/>
<evidence type="ECO:0000255" key="2">
    <source>
        <dbReference type="PROSITE-ProRule" id="PRU00260"/>
    </source>
</evidence>
<evidence type="ECO:0000269" key="3">
    <source>
    </source>
</evidence>
<evidence type="ECO:0000305" key="4"/>
<comment type="catalytic activity">
    <reaction>
        <text>Hydrolysis of terminal non-reducing beta-D-galactose residues in beta-D-galactosides.</text>
        <dbReference type="EC" id="3.2.1.23"/>
    </reaction>
</comment>
<comment type="subcellular location">
    <subcellularLocation>
        <location evidence="4">Secreted</location>
        <location evidence="4">Extracellular space</location>
        <location evidence="4">Apoplast</location>
    </subcellularLocation>
</comment>
<comment type="tissue specificity">
    <text evidence="3">Ubiquitous, with higher levels in roots and siliques.</text>
</comment>
<comment type="similarity">
    <text evidence="4">Belongs to the glycosyl hydrolase 35 family.</text>
</comment>
<protein>
    <recommendedName>
        <fullName>Beta-galactosidase 15</fullName>
        <shortName>Lactase 15</shortName>
        <ecNumber>3.2.1.23</ecNumber>
    </recommendedName>
</protein>